<reference key="1">
    <citation type="submission" date="2005-08" db="EMBL/GenBank/DDBJ databases">
        <authorList>
            <consortium name="NIH - Mammalian Gene Collection (MGC) project"/>
        </authorList>
    </citation>
    <scope>NUCLEOTIDE SEQUENCE [LARGE SCALE MRNA]</scope>
    <source>
        <strain>Hereford</strain>
        <tissue>Heart ventricle</tissue>
    </source>
</reference>
<feature type="transit peptide" description="Mitochondrion" evidence="1">
    <location>
        <begin position="1"/>
        <end position="39"/>
    </location>
</feature>
<feature type="chain" id="PRO_0000244733" description="Creatine kinase S-type, mitochondrial">
    <location>
        <begin position="40"/>
        <end position="419"/>
    </location>
</feature>
<feature type="domain" description="Phosphagen kinase N-terminal" evidence="4">
    <location>
        <begin position="46"/>
        <end position="132"/>
    </location>
</feature>
<feature type="domain" description="Phosphagen kinase C-terminal" evidence="5">
    <location>
        <begin position="159"/>
        <end position="401"/>
    </location>
</feature>
<feature type="region of interest" description="Cardiolipin-binding" evidence="1">
    <location>
        <begin position="40"/>
        <end position="64"/>
    </location>
</feature>
<feature type="binding site" evidence="5">
    <location>
        <begin position="162"/>
        <end position="166"/>
    </location>
    <ligand>
        <name>ATP</name>
        <dbReference type="ChEBI" id="CHEBI:30616"/>
    </ligand>
</feature>
<feature type="binding site" evidence="5">
    <location>
        <position position="225"/>
    </location>
    <ligand>
        <name>ATP</name>
        <dbReference type="ChEBI" id="CHEBI:30616"/>
    </ligand>
</feature>
<feature type="binding site" evidence="5">
    <location>
        <position position="270"/>
    </location>
    <ligand>
        <name>ATP</name>
        <dbReference type="ChEBI" id="CHEBI:30616"/>
    </ligand>
</feature>
<feature type="binding site" evidence="5">
    <location>
        <position position="326"/>
    </location>
    <ligand>
        <name>ATP</name>
        <dbReference type="ChEBI" id="CHEBI:30616"/>
    </ligand>
</feature>
<feature type="binding site" evidence="5">
    <location>
        <begin position="354"/>
        <end position="359"/>
    </location>
    <ligand>
        <name>ATP</name>
        <dbReference type="ChEBI" id="CHEBI:30616"/>
    </ligand>
</feature>
<feature type="binding site" evidence="5">
    <location>
        <position position="369"/>
    </location>
    <ligand>
        <name>ATP</name>
        <dbReference type="ChEBI" id="CHEBI:30616"/>
    </ligand>
</feature>
<feature type="modified residue" description="Phosphotyrosine" evidence="2">
    <location>
        <position position="255"/>
    </location>
</feature>
<feature type="modified residue" description="Phosphothreonine" evidence="3">
    <location>
        <position position="356"/>
    </location>
</feature>
<proteinExistence type="evidence at transcript level"/>
<keyword id="KW-0067">ATP-binding</keyword>
<keyword id="KW-0418">Kinase</keyword>
<keyword id="KW-0472">Membrane</keyword>
<keyword id="KW-0496">Mitochondrion</keyword>
<keyword id="KW-0999">Mitochondrion inner membrane</keyword>
<keyword id="KW-0547">Nucleotide-binding</keyword>
<keyword id="KW-0597">Phosphoprotein</keyword>
<keyword id="KW-1185">Reference proteome</keyword>
<keyword id="KW-0808">Transferase</keyword>
<keyword id="KW-0809">Transit peptide</keyword>
<organism>
    <name type="scientific">Bos taurus</name>
    <name type="common">Bovine</name>
    <dbReference type="NCBI Taxonomy" id="9913"/>
    <lineage>
        <taxon>Eukaryota</taxon>
        <taxon>Metazoa</taxon>
        <taxon>Chordata</taxon>
        <taxon>Craniata</taxon>
        <taxon>Vertebrata</taxon>
        <taxon>Euteleostomi</taxon>
        <taxon>Mammalia</taxon>
        <taxon>Eutheria</taxon>
        <taxon>Laurasiatheria</taxon>
        <taxon>Artiodactyla</taxon>
        <taxon>Ruminantia</taxon>
        <taxon>Pecora</taxon>
        <taxon>Bovidae</taxon>
        <taxon>Bovinae</taxon>
        <taxon>Bos</taxon>
    </lineage>
</organism>
<gene>
    <name type="primary">CKMT2</name>
</gene>
<evidence type="ECO:0000250" key="1"/>
<evidence type="ECO:0000250" key="2">
    <source>
        <dbReference type="UniProtKB" id="P09605"/>
    </source>
</evidence>
<evidence type="ECO:0000250" key="3">
    <source>
        <dbReference type="UniProtKB" id="Q6P8J7"/>
    </source>
</evidence>
<evidence type="ECO:0000255" key="4">
    <source>
        <dbReference type="PROSITE-ProRule" id="PRU00842"/>
    </source>
</evidence>
<evidence type="ECO:0000255" key="5">
    <source>
        <dbReference type="PROSITE-ProRule" id="PRU00843"/>
    </source>
</evidence>
<evidence type="ECO:0000255" key="6">
    <source>
        <dbReference type="PROSITE-ProRule" id="PRU10029"/>
    </source>
</evidence>
<accession>Q3ZBP1</accession>
<comment type="function">
    <text evidence="1">Reversibly catalyzes the transfer of phosphate between ATP and various phosphogens (e.g. creatine phosphate). Creatine kinase isoenzymes play a central role in energy transduction in tissues with large, fluctuating energy demands, such as skeletal muscle, heart, brain and spermatozoa (By similarity).</text>
</comment>
<comment type="catalytic activity">
    <reaction evidence="6">
        <text>creatine + ATP = N-phosphocreatine + ADP + H(+)</text>
        <dbReference type="Rhea" id="RHEA:17157"/>
        <dbReference type="ChEBI" id="CHEBI:15378"/>
        <dbReference type="ChEBI" id="CHEBI:30616"/>
        <dbReference type="ChEBI" id="CHEBI:57947"/>
        <dbReference type="ChEBI" id="CHEBI:58092"/>
        <dbReference type="ChEBI" id="CHEBI:456216"/>
        <dbReference type="EC" id="2.7.3.2"/>
    </reaction>
</comment>
<comment type="subunit">
    <text evidence="1">Exists as an octamer composed of four CKMT2 homodimers.</text>
</comment>
<comment type="subcellular location">
    <subcellularLocation>
        <location evidence="1">Mitochondrion inner membrane</location>
        <topology evidence="1">Peripheral membrane protein</topology>
        <orientation evidence="1">Intermembrane side</orientation>
    </subcellularLocation>
</comment>
<comment type="miscellaneous">
    <text>Mitochondrial creatine kinase binds cardiolipin.</text>
</comment>
<comment type="similarity">
    <text evidence="4 5">Belongs to the ATP:guanido phosphotransferase family.</text>
</comment>
<dbReference type="EC" id="2.7.3.2"/>
<dbReference type="EMBL" id="BC103190">
    <property type="protein sequence ID" value="AAI03191.1"/>
    <property type="molecule type" value="mRNA"/>
</dbReference>
<dbReference type="RefSeq" id="NP_001029828.1">
    <property type="nucleotide sequence ID" value="NM_001034656.2"/>
</dbReference>
<dbReference type="SMR" id="Q3ZBP1"/>
<dbReference type="FunCoup" id="Q3ZBP1">
    <property type="interactions" value="146"/>
</dbReference>
<dbReference type="IntAct" id="Q3ZBP1">
    <property type="interactions" value="1"/>
</dbReference>
<dbReference type="STRING" id="9913.ENSBTAP00000001330"/>
<dbReference type="PaxDb" id="9913-ENSBTAP00000001330"/>
<dbReference type="GeneID" id="538944"/>
<dbReference type="KEGG" id="bta:538944"/>
<dbReference type="CTD" id="1160"/>
<dbReference type="eggNOG" id="KOG3581">
    <property type="taxonomic scope" value="Eukaryota"/>
</dbReference>
<dbReference type="InParanoid" id="Q3ZBP1"/>
<dbReference type="OrthoDB" id="430219at2759"/>
<dbReference type="Proteomes" id="UP000009136">
    <property type="component" value="Unplaced"/>
</dbReference>
<dbReference type="GO" id="GO:0005743">
    <property type="term" value="C:mitochondrial inner membrane"/>
    <property type="evidence" value="ECO:0007669"/>
    <property type="project" value="UniProtKB-SubCell"/>
</dbReference>
<dbReference type="GO" id="GO:0005739">
    <property type="term" value="C:mitochondrion"/>
    <property type="evidence" value="ECO:0000318"/>
    <property type="project" value="GO_Central"/>
</dbReference>
<dbReference type="GO" id="GO:0005524">
    <property type="term" value="F:ATP binding"/>
    <property type="evidence" value="ECO:0007669"/>
    <property type="project" value="UniProtKB-KW"/>
</dbReference>
<dbReference type="GO" id="GO:0004111">
    <property type="term" value="F:creatine kinase activity"/>
    <property type="evidence" value="ECO:0000318"/>
    <property type="project" value="GO_Central"/>
</dbReference>
<dbReference type="GO" id="GO:0046314">
    <property type="term" value="P:phosphocreatine biosynthetic process"/>
    <property type="evidence" value="ECO:0000318"/>
    <property type="project" value="GO_Central"/>
</dbReference>
<dbReference type="CDD" id="cd00716">
    <property type="entry name" value="creatine_kinase_like"/>
    <property type="match status" value="1"/>
</dbReference>
<dbReference type="FunFam" id="3.30.590.10:FF:000002">
    <property type="entry name" value="Creatine kinase S-type, mitochondrial"/>
    <property type="match status" value="1"/>
</dbReference>
<dbReference type="FunFam" id="1.10.135.10:FF:000002">
    <property type="entry name" value="creatine kinase S-type, mitochondrial"/>
    <property type="match status" value="1"/>
</dbReference>
<dbReference type="Gene3D" id="1.10.135.10">
    <property type="entry name" value="ATP:guanido phosphotransferase, N-terminal domain"/>
    <property type="match status" value="1"/>
</dbReference>
<dbReference type="Gene3D" id="3.30.590.10">
    <property type="entry name" value="Glutamine synthetase/guanido kinase, catalytic domain"/>
    <property type="match status" value="1"/>
</dbReference>
<dbReference type="InterPro" id="IPR000749">
    <property type="entry name" value="ATP-guanido_PTrfase"/>
</dbReference>
<dbReference type="InterPro" id="IPR022415">
    <property type="entry name" value="ATP-guanido_PTrfase_AS"/>
</dbReference>
<dbReference type="InterPro" id="IPR022414">
    <property type="entry name" value="ATP-guanido_PTrfase_cat"/>
</dbReference>
<dbReference type="InterPro" id="IPR022413">
    <property type="entry name" value="ATP-guanido_PTrfase_N"/>
</dbReference>
<dbReference type="InterPro" id="IPR036802">
    <property type="entry name" value="ATP-guanido_PTrfase_N_sf"/>
</dbReference>
<dbReference type="InterPro" id="IPR014746">
    <property type="entry name" value="Gln_synth/guanido_kin_cat_dom"/>
</dbReference>
<dbReference type="PANTHER" id="PTHR11547">
    <property type="entry name" value="ARGININE OR CREATINE KINASE"/>
    <property type="match status" value="1"/>
</dbReference>
<dbReference type="PANTHER" id="PTHR11547:SF19">
    <property type="entry name" value="CREATINE KINASE S-TYPE, MITOCHONDRIAL"/>
    <property type="match status" value="1"/>
</dbReference>
<dbReference type="Pfam" id="PF00217">
    <property type="entry name" value="ATP-gua_Ptrans"/>
    <property type="match status" value="1"/>
</dbReference>
<dbReference type="Pfam" id="PF02807">
    <property type="entry name" value="ATP-gua_PtransN"/>
    <property type="match status" value="1"/>
</dbReference>
<dbReference type="SUPFAM" id="SSF55931">
    <property type="entry name" value="Glutamine synthetase/guanido kinase"/>
    <property type="match status" value="1"/>
</dbReference>
<dbReference type="SUPFAM" id="SSF48034">
    <property type="entry name" value="Guanido kinase N-terminal domain"/>
    <property type="match status" value="1"/>
</dbReference>
<dbReference type="PROSITE" id="PS00112">
    <property type="entry name" value="PHOSPHAGEN_KINASE"/>
    <property type="match status" value="1"/>
</dbReference>
<dbReference type="PROSITE" id="PS51510">
    <property type="entry name" value="PHOSPHAGEN_KINASE_C"/>
    <property type="match status" value="1"/>
</dbReference>
<dbReference type="PROSITE" id="PS51509">
    <property type="entry name" value="PHOSPHAGEN_KINASE_N"/>
    <property type="match status" value="1"/>
</dbReference>
<sequence length="419" mass="47231">MASTFSKLLTGRNASLLFATLGTGALTTGYLLNKQNVCAAAREQHKLFPPSADYPDLRKHNNCMAECLTPAIYAKLRNKVTPSGYTLDQCIQTGVDNPGHPFIKTVGMVAGDEESYEVFADLFDPVIKLRHNGYDPRVMKHPTDLDASKITQGQFDERYVLSSRVRTGRSIRGLSLPPACSRAELREVENVAITALEGLKGDLAGRYYKLSEMTEQDQQRLIDDHFLFDKPVSPLLTCAGMARDWPDARGIWHNYDKTFLIWINEEDHTRVISMEKGGNMKRVFERFCRGLKEVERLIQERGWEFMWNERLGYILTCPSNLGTGLRAGVHVRIPKLSKDPRFSKILENLRLQKRGTGGVDTAAVADVYDISNIDRIGRSEVELVQIVIDGVNYLVDCEKKLERGQDIKVPPPLPQFGKK</sequence>
<protein>
    <recommendedName>
        <fullName>Creatine kinase S-type, mitochondrial</fullName>
        <ecNumber>2.7.3.2</ecNumber>
    </recommendedName>
    <alternativeName>
        <fullName>Basic-type mitochondrial creatine kinase</fullName>
        <shortName>Mib-CK</shortName>
    </alternativeName>
    <alternativeName>
        <fullName>Sarcomeric mitochondrial creatine kinase</fullName>
        <shortName>S-MtCK</shortName>
    </alternativeName>
</protein>
<name>KCRS_BOVIN</name>